<proteinExistence type="inferred from homology"/>
<evidence type="ECO:0000255" key="1">
    <source>
        <dbReference type="HAMAP-Rule" id="MF_01679"/>
    </source>
</evidence>
<feature type="chain" id="PRO_1000187374" description="2,3-diketo-5-methylthiopentyl-1-phosphate enolase">
    <location>
        <begin position="1"/>
        <end position="414"/>
    </location>
</feature>
<feature type="active site" description="Proton acceptor" evidence="1">
    <location>
        <position position="99"/>
    </location>
</feature>
<feature type="binding site" evidence="1">
    <location>
        <position position="148"/>
    </location>
    <ligand>
        <name>substrate</name>
    </ligand>
</feature>
<feature type="binding site" evidence="1">
    <location>
        <begin position="174"/>
        <end position="177"/>
    </location>
    <ligand>
        <name>substrate</name>
    </ligand>
</feature>
<feature type="binding site" description="via carbamate group" evidence="1">
    <location>
        <position position="174"/>
    </location>
    <ligand>
        <name>Mg(2+)</name>
        <dbReference type="ChEBI" id="CHEBI:18420"/>
    </ligand>
</feature>
<feature type="binding site" evidence="1">
    <location>
        <position position="176"/>
    </location>
    <ligand>
        <name>Mg(2+)</name>
        <dbReference type="ChEBI" id="CHEBI:18420"/>
    </ligand>
</feature>
<feature type="binding site" evidence="1">
    <location>
        <position position="177"/>
    </location>
    <ligand>
        <name>Mg(2+)</name>
        <dbReference type="ChEBI" id="CHEBI:18420"/>
    </ligand>
</feature>
<feature type="binding site" evidence="1">
    <location>
        <position position="265"/>
    </location>
    <ligand>
        <name>substrate</name>
    </ligand>
</feature>
<feature type="binding site" evidence="1">
    <location>
        <position position="338"/>
    </location>
    <ligand>
        <name>substrate</name>
    </ligand>
</feature>
<feature type="binding site" evidence="1">
    <location>
        <begin position="360"/>
        <end position="361"/>
    </location>
    <ligand>
        <name>substrate</name>
    </ligand>
</feature>
<feature type="modified residue" description="N6-carboxylysine" evidence="1">
    <location>
        <position position="174"/>
    </location>
</feature>
<sequence length="414" mass="45525">MSGIIATYLIHDDSHNLEKKAEQIALGLTIGSWTHLPHLLQEQLKQHKGNVLHVEELAEHEHTNSYLRKKVKRGIIKIEYPLLNFSPDLPAILTTTFGKLSLDGEVKLIDLTFSDELKKHFPGPKFGIDGIRNLLQVHDRPLLMSIFKGMIGRNIGYLKTQLRDQAIGGVDIVKDDEILFENALTPLTNRIVSGKEVLQSVYETYGHKTLYAVNVTGRTFDLKENAKRAVQAGADILLFNVFAYGLDVLQSLAEDDEIPVPIMAHPAVSGAYSASKLYGISSPLLLGKLLRYAGADFSLFPSPYGSVALEKEEALAISKYLTEDDVFFKKSFSVPSAGIHPGFVPFIIRDFGKDVVINAGGGIHGHPNGAQGGGKAFRTAIDATLQNKPLHEVDDINLHSALQIWGNPSHEVKL</sequence>
<reference key="1">
    <citation type="submission" date="2008-10" db="EMBL/GenBank/DDBJ databases">
        <title>Genome sequence of Bacillus anthracis str. CDC 684.</title>
        <authorList>
            <person name="Dodson R.J."/>
            <person name="Munk A.C."/>
            <person name="Brettin T."/>
            <person name="Bruce D."/>
            <person name="Detter C."/>
            <person name="Tapia R."/>
            <person name="Han C."/>
            <person name="Sutton G."/>
            <person name="Sims D."/>
        </authorList>
    </citation>
    <scope>NUCLEOTIDE SEQUENCE [LARGE SCALE GENOMIC DNA]</scope>
    <source>
        <strain>CDC 684 / NRRL 3495</strain>
    </source>
</reference>
<name>MTNW_BACAC</name>
<comment type="function">
    <text evidence="1">Catalyzes the enolization of 2,3-diketo-5-methylthiopentyl-1-phosphate (DK-MTP-1-P) into 2-hydroxy-3-keto-5-methylthiopentenyl-1-phosphate (HK-MTPenyl-1-P).</text>
</comment>
<comment type="catalytic activity">
    <reaction evidence="1">
        <text>5-methylsulfanyl-2,3-dioxopentyl phosphate = 2-hydroxy-5-methylsulfanyl-3-oxopent-1-enyl phosphate</text>
        <dbReference type="Rhea" id="RHEA:18769"/>
        <dbReference type="ChEBI" id="CHEBI:58828"/>
        <dbReference type="ChEBI" id="CHEBI:59505"/>
        <dbReference type="EC" id="5.3.2.5"/>
    </reaction>
</comment>
<comment type="cofactor">
    <cofactor evidence="1">
        <name>Mg(2+)</name>
        <dbReference type="ChEBI" id="CHEBI:18420"/>
    </cofactor>
    <text evidence="1">Binds 1 Mg(2+) ion per subunit.</text>
</comment>
<comment type="pathway">
    <text evidence="1">Amino-acid biosynthesis; L-methionine biosynthesis via salvage pathway; L-methionine from S-methyl-5-thio-alpha-D-ribose 1-phosphate: step 3/6.</text>
</comment>
<comment type="subunit">
    <text evidence="1">Homodimer.</text>
</comment>
<comment type="miscellaneous">
    <text evidence="1">Has no RuBP-carboxylation activity.</text>
</comment>
<comment type="similarity">
    <text evidence="1">Belongs to the RuBisCO large chain family. Type IV subfamily.</text>
</comment>
<protein>
    <recommendedName>
        <fullName evidence="1">2,3-diketo-5-methylthiopentyl-1-phosphate enolase</fullName>
        <shortName evidence="1">DK-MTP-1-P enolase</shortName>
        <ecNumber evidence="1">5.3.2.5</ecNumber>
    </recommendedName>
    <alternativeName>
        <fullName evidence="1">RuBisCO-like protein</fullName>
        <shortName evidence="1">RLP</shortName>
    </alternativeName>
</protein>
<accession>C3LIA6</accession>
<gene>
    <name evidence="1" type="primary">mtnW</name>
    <name type="ordered locus">BAMEG_4296</name>
</gene>
<keyword id="KW-0028">Amino-acid biosynthesis</keyword>
<keyword id="KW-0413">Isomerase</keyword>
<keyword id="KW-0460">Magnesium</keyword>
<keyword id="KW-0479">Metal-binding</keyword>
<keyword id="KW-0486">Methionine biosynthesis</keyword>
<dbReference type="EC" id="5.3.2.5" evidence="1"/>
<dbReference type="EMBL" id="CP001215">
    <property type="protein sequence ID" value="ACP14181.1"/>
    <property type="molecule type" value="Genomic_DNA"/>
</dbReference>
<dbReference type="RefSeq" id="WP_000014200.1">
    <property type="nucleotide sequence ID" value="NC_012581.1"/>
</dbReference>
<dbReference type="SMR" id="C3LIA6"/>
<dbReference type="GeneID" id="45023926"/>
<dbReference type="KEGG" id="bah:BAMEG_4296"/>
<dbReference type="HOGENOM" id="CLU_031450_3_1_9"/>
<dbReference type="UniPathway" id="UPA00904">
    <property type="reaction ID" value="UER00876"/>
</dbReference>
<dbReference type="GO" id="GO:0043715">
    <property type="term" value="F:2,3-diketo-5-methylthiopentyl-1-phosphate enolase activity"/>
    <property type="evidence" value="ECO:0007669"/>
    <property type="project" value="UniProtKB-UniRule"/>
</dbReference>
<dbReference type="GO" id="GO:0000287">
    <property type="term" value="F:magnesium ion binding"/>
    <property type="evidence" value="ECO:0007669"/>
    <property type="project" value="UniProtKB-UniRule"/>
</dbReference>
<dbReference type="GO" id="GO:0016984">
    <property type="term" value="F:ribulose-bisphosphate carboxylase activity"/>
    <property type="evidence" value="ECO:0007669"/>
    <property type="project" value="InterPro"/>
</dbReference>
<dbReference type="GO" id="GO:0015977">
    <property type="term" value="P:carbon fixation"/>
    <property type="evidence" value="ECO:0007669"/>
    <property type="project" value="InterPro"/>
</dbReference>
<dbReference type="GO" id="GO:0019509">
    <property type="term" value="P:L-methionine salvage from methylthioadenosine"/>
    <property type="evidence" value="ECO:0007669"/>
    <property type="project" value="UniProtKB-UniRule"/>
</dbReference>
<dbReference type="CDD" id="cd08209">
    <property type="entry name" value="RLP_DK-MTP-1-P-enolase"/>
    <property type="match status" value="1"/>
</dbReference>
<dbReference type="FunFam" id="3.20.20.110:FF:000002">
    <property type="entry name" value="2,3-diketo-5-methylthiopentyl-1-phosphate enolase"/>
    <property type="match status" value="1"/>
</dbReference>
<dbReference type="Gene3D" id="3.20.20.110">
    <property type="entry name" value="Ribulose bisphosphate carboxylase, large subunit, C-terminal domain"/>
    <property type="match status" value="1"/>
</dbReference>
<dbReference type="Gene3D" id="3.30.70.150">
    <property type="entry name" value="RuBisCO large subunit, N-terminal domain"/>
    <property type="match status" value="1"/>
</dbReference>
<dbReference type="HAMAP" id="MF_01679">
    <property type="entry name" value="Salvage_MtnW"/>
    <property type="match status" value="1"/>
</dbReference>
<dbReference type="InterPro" id="IPR017717">
    <property type="entry name" value="Diketo-Methiopentyl-P_enolase"/>
</dbReference>
<dbReference type="InterPro" id="IPR033966">
    <property type="entry name" value="RuBisCO"/>
</dbReference>
<dbReference type="InterPro" id="IPR000685">
    <property type="entry name" value="RuBisCO_lsu_C"/>
</dbReference>
<dbReference type="InterPro" id="IPR036376">
    <property type="entry name" value="RuBisCO_lsu_C_sf"/>
</dbReference>
<dbReference type="InterPro" id="IPR017443">
    <property type="entry name" value="RuBisCO_lsu_fd_N"/>
</dbReference>
<dbReference type="InterPro" id="IPR036422">
    <property type="entry name" value="RuBisCO_lsu_N_sf"/>
</dbReference>
<dbReference type="NCBIfam" id="NF007095">
    <property type="entry name" value="PRK09549.1"/>
    <property type="match status" value="1"/>
</dbReference>
<dbReference type="NCBIfam" id="TIGR03332">
    <property type="entry name" value="salvage_mtnW"/>
    <property type="match status" value="1"/>
</dbReference>
<dbReference type="PANTHER" id="PTHR42704">
    <property type="entry name" value="RIBULOSE BISPHOSPHATE CARBOXYLASE"/>
    <property type="match status" value="1"/>
</dbReference>
<dbReference type="PANTHER" id="PTHR42704:SF17">
    <property type="entry name" value="RIBULOSE BISPHOSPHATE CARBOXYLASE LARGE CHAIN"/>
    <property type="match status" value="1"/>
</dbReference>
<dbReference type="Pfam" id="PF00016">
    <property type="entry name" value="RuBisCO_large"/>
    <property type="match status" value="1"/>
</dbReference>
<dbReference type="Pfam" id="PF02788">
    <property type="entry name" value="RuBisCO_large_N"/>
    <property type="match status" value="1"/>
</dbReference>
<dbReference type="SFLD" id="SFLDF00157">
    <property type="entry name" value="2_3-diketo-5-methylthiopentyl"/>
    <property type="match status" value="1"/>
</dbReference>
<dbReference type="SFLD" id="SFLDS00014">
    <property type="entry name" value="RuBisCO"/>
    <property type="match status" value="1"/>
</dbReference>
<dbReference type="SUPFAM" id="SSF51649">
    <property type="entry name" value="RuBisCo, C-terminal domain"/>
    <property type="match status" value="1"/>
</dbReference>
<dbReference type="SUPFAM" id="SSF54966">
    <property type="entry name" value="RuBisCO, large subunit, small (N-terminal) domain"/>
    <property type="match status" value="1"/>
</dbReference>
<organism>
    <name type="scientific">Bacillus anthracis (strain CDC 684 / NRRL 3495)</name>
    <dbReference type="NCBI Taxonomy" id="568206"/>
    <lineage>
        <taxon>Bacteria</taxon>
        <taxon>Bacillati</taxon>
        <taxon>Bacillota</taxon>
        <taxon>Bacilli</taxon>
        <taxon>Bacillales</taxon>
        <taxon>Bacillaceae</taxon>
        <taxon>Bacillus</taxon>
        <taxon>Bacillus cereus group</taxon>
    </lineage>
</organism>